<proteinExistence type="evidence at transcript level"/>
<sequence length="709" mass="78311">MELSSVLPCKRCTPWRGLLLTASLLTCWLLPTTAQVSIESLPPQVVEGENVLLHVDNLPENLIAFVWYKGLTNMSLGVALYSLTYNVTVTGPVHSGRETLYSNGSLWIQNVTQKDTGFYTLRTISNHGEIVSNTSLHLHVYFSTLTCGRAATSAQLSIESVPTSISKGESALLLAHNLPENLRAIFWYKGAIVFKDLEVARYVIGTNSSVPGPAHSGRETMYSNGSLLLQNVTRNDAGFYTLKTLSTDLKTEIAYVQLQVDTCFMSYAGPPTSAQLTVESAPTSVAEGASVLLLVHNLPENLRAIFWYKGVILFKDLEVARYVIGTNSSVLGPAHSGRETMYSNGSLLLQNVTRNDAGFYTLRTLSTDLKAKVVHVQLQVNTSSCCDPLTPALLTIDPVPRHAAKGESVLLQVRNLPEDLRMFIWFKSVYTSQIFKIAEYSRAINYVFRGPAHSGRETVYTNGSLLLQDATEKDTGLYTLQIIYRNFKIETAHVQVSVHTCVHPSTTGQLVIESVPPNVVEGGDVLLLVHNMPENLQSFSWYKGVAIVNRHEISRNIIASNRSTLGPAHSGRETIYSNGSLLLHNATEEDNGLYTLWTVNRHSETQGIHVHIHIYKPVAQPFIRVTESSVRVKSSVVLTCLSADTGTSIQWLFNNQNLRLTQRMSLSQTKCQLSIDPVRREDAGEYRCEVSNPVSSKTSLPVSLDVIIE</sequence>
<accession>Q63111</accession>
<accession>Q63101</accession>
<protein>
    <recommendedName>
        <fullName evidence="4">Cell adhesion molecule CEACAM3</fullName>
    </recommendedName>
    <alternativeName>
        <fullName>Carcinoembryonic antigen CGM1</fullName>
    </alternativeName>
    <alternativeName>
        <fullName>Carcinoembryonic antigen-related cell adhesion molecule 3</fullName>
        <shortName evidence="7">CEA cell adhesion molecule 3</shortName>
    </alternativeName>
</protein>
<evidence type="ECO:0000255" key="1"/>
<evidence type="ECO:0000269" key="2">
    <source>
    </source>
</evidence>
<evidence type="ECO:0000303" key="3">
    <source>
    </source>
</evidence>
<evidence type="ECO:0000305" key="4"/>
<evidence type="ECO:0000312" key="5">
    <source>
        <dbReference type="EMBL" id="AAA40908.1"/>
    </source>
</evidence>
<evidence type="ECO:0000312" key="6">
    <source>
        <dbReference type="EMBL" id="AAA66037.1"/>
    </source>
</evidence>
<evidence type="ECO:0000312" key="7">
    <source>
        <dbReference type="RGD" id="2333"/>
    </source>
</evidence>
<comment type="function">
    <text evidence="3">Possibly involved in cell adhesion.</text>
</comment>
<comment type="tissue specificity">
    <text evidence="2">Expression detected only in placenta.</text>
</comment>
<comment type="developmental stage">
    <text evidence="2">Expressed in both adult and embryo.</text>
</comment>
<comment type="similarity">
    <text evidence="1">Belongs to the immunoglobulin superfamily. CEA family.</text>
</comment>
<comment type="caution">
    <text evidence="4">This is not the ortholog of human CEACAM3.</text>
</comment>
<keyword id="KW-0325">Glycoprotein</keyword>
<keyword id="KW-0393">Immunoglobulin domain</keyword>
<keyword id="KW-1185">Reference proteome</keyword>
<keyword id="KW-0677">Repeat</keyword>
<keyword id="KW-0732">Signal</keyword>
<name>CEAM3_RAT</name>
<organism>
    <name type="scientific">Rattus norvegicus</name>
    <name type="common">Rat</name>
    <dbReference type="NCBI Taxonomy" id="10116"/>
    <lineage>
        <taxon>Eukaryota</taxon>
        <taxon>Metazoa</taxon>
        <taxon>Chordata</taxon>
        <taxon>Craniata</taxon>
        <taxon>Vertebrata</taxon>
        <taxon>Euteleostomi</taxon>
        <taxon>Mammalia</taxon>
        <taxon>Eutheria</taxon>
        <taxon>Euarchontoglires</taxon>
        <taxon>Glires</taxon>
        <taxon>Rodentia</taxon>
        <taxon>Myomorpha</taxon>
        <taxon>Muroidea</taxon>
        <taxon>Muridae</taxon>
        <taxon>Murinae</taxon>
        <taxon>Rattus</taxon>
    </lineage>
</organism>
<dbReference type="EMBL" id="M32474">
    <property type="protein sequence ID" value="AAA66037.1"/>
    <property type="molecule type" value="mRNA"/>
</dbReference>
<dbReference type="EMBL" id="M60023">
    <property type="protein sequence ID" value="AAA40908.1"/>
    <property type="molecule type" value="Genomic_DNA"/>
</dbReference>
<dbReference type="PIR" id="A33876">
    <property type="entry name" value="A33876"/>
</dbReference>
<dbReference type="PIR" id="A35364">
    <property type="entry name" value="A35364"/>
</dbReference>
<dbReference type="STRING" id="10116.ENSRNOP00000023663"/>
<dbReference type="GlyCosmos" id="Q63111">
    <property type="glycosylation" value="16 sites, No reported glycans"/>
</dbReference>
<dbReference type="GlyGen" id="Q63111">
    <property type="glycosylation" value="16 sites"/>
</dbReference>
<dbReference type="PhosphoSitePlus" id="Q63111"/>
<dbReference type="PaxDb" id="10116-ENSRNOP00000023663"/>
<dbReference type="UCSC" id="RGD:2333">
    <property type="organism name" value="rat"/>
</dbReference>
<dbReference type="AGR" id="RGD:2333"/>
<dbReference type="RGD" id="2333">
    <property type="gene designation" value="Ceacam3"/>
</dbReference>
<dbReference type="eggNOG" id="ENOG502RXPD">
    <property type="taxonomic scope" value="Eukaryota"/>
</dbReference>
<dbReference type="InParanoid" id="Q63111"/>
<dbReference type="OrthoDB" id="6353782at2759"/>
<dbReference type="PhylomeDB" id="Q63111"/>
<dbReference type="PRO" id="PR:Q63111"/>
<dbReference type="Proteomes" id="UP000002494">
    <property type="component" value="Unplaced"/>
</dbReference>
<dbReference type="GO" id="GO:0009897">
    <property type="term" value="C:external side of plasma membrane"/>
    <property type="evidence" value="ECO:0000318"/>
    <property type="project" value="GO_Central"/>
</dbReference>
<dbReference type="GO" id="GO:0006955">
    <property type="term" value="P:immune response"/>
    <property type="evidence" value="ECO:0000318"/>
    <property type="project" value="GO_Central"/>
</dbReference>
<dbReference type="GO" id="GO:0042110">
    <property type="term" value="P:T cell activation"/>
    <property type="evidence" value="ECO:0000318"/>
    <property type="project" value="GO_Central"/>
</dbReference>
<dbReference type="CDD" id="cd05740">
    <property type="entry name" value="IgI_hCEACAM_2_4_6_like"/>
    <property type="match status" value="1"/>
</dbReference>
<dbReference type="CDD" id="cd05774">
    <property type="entry name" value="IgV_CEACAM_D1"/>
    <property type="match status" value="5"/>
</dbReference>
<dbReference type="FunFam" id="2.60.40.10:FF:000340">
    <property type="entry name" value="Carcinoembryonic antigen-related cell adhesion molecule 1"/>
    <property type="match status" value="5"/>
</dbReference>
<dbReference type="FunFam" id="2.60.40.10:FF:000244">
    <property type="entry name" value="carcinoembryonic antigen-related cell adhesion molecule 16"/>
    <property type="match status" value="1"/>
</dbReference>
<dbReference type="Gene3D" id="2.60.40.10">
    <property type="entry name" value="Immunoglobulins"/>
    <property type="match status" value="6"/>
</dbReference>
<dbReference type="InterPro" id="IPR050831">
    <property type="entry name" value="CEA_cell_adhesion"/>
</dbReference>
<dbReference type="InterPro" id="IPR007110">
    <property type="entry name" value="Ig-like_dom"/>
</dbReference>
<dbReference type="InterPro" id="IPR036179">
    <property type="entry name" value="Ig-like_dom_sf"/>
</dbReference>
<dbReference type="InterPro" id="IPR013783">
    <property type="entry name" value="Ig-like_fold"/>
</dbReference>
<dbReference type="InterPro" id="IPR003599">
    <property type="entry name" value="Ig_sub"/>
</dbReference>
<dbReference type="InterPro" id="IPR003598">
    <property type="entry name" value="Ig_sub2"/>
</dbReference>
<dbReference type="InterPro" id="IPR013106">
    <property type="entry name" value="Ig_V-set"/>
</dbReference>
<dbReference type="InterPro" id="IPR013151">
    <property type="entry name" value="Immunoglobulin_dom"/>
</dbReference>
<dbReference type="PANTHER" id="PTHR44427:SF1">
    <property type="entry name" value="CARCINOEMBRYONIC ANTIGEN-RELATED CELL ADHESION MOLECULE 1"/>
    <property type="match status" value="1"/>
</dbReference>
<dbReference type="PANTHER" id="PTHR44427">
    <property type="entry name" value="CARCINOEMBRYONIC ANTIGEN-RELATED CELL ADHESION MOLECULE 19"/>
    <property type="match status" value="1"/>
</dbReference>
<dbReference type="Pfam" id="PF00047">
    <property type="entry name" value="ig"/>
    <property type="match status" value="1"/>
</dbReference>
<dbReference type="Pfam" id="PF07686">
    <property type="entry name" value="V-set"/>
    <property type="match status" value="5"/>
</dbReference>
<dbReference type="SMART" id="SM00409">
    <property type="entry name" value="IG"/>
    <property type="match status" value="6"/>
</dbReference>
<dbReference type="SMART" id="SM00408">
    <property type="entry name" value="IGc2"/>
    <property type="match status" value="2"/>
</dbReference>
<dbReference type="SUPFAM" id="SSF48726">
    <property type="entry name" value="Immunoglobulin"/>
    <property type="match status" value="6"/>
</dbReference>
<dbReference type="PROSITE" id="PS50835">
    <property type="entry name" value="IG_LIKE"/>
    <property type="match status" value="1"/>
</dbReference>
<feature type="signal peptide" evidence="1">
    <location>
        <begin position="1"/>
        <end position="34"/>
    </location>
</feature>
<feature type="chain" id="PRO_0000014575" description="Cell adhesion molecule CEACAM3" evidence="1">
    <location>
        <begin position="35"/>
        <end position="709"/>
    </location>
</feature>
<feature type="domain" description="Ig-like V-type 1" evidence="3">
    <location>
        <begin position="35"/>
        <end position="142"/>
    </location>
</feature>
<feature type="domain" description="Ig-like V-type 2" evidence="3">
    <location>
        <begin position="155"/>
        <end position="262"/>
    </location>
</feature>
<feature type="domain" description="Ig-like V-type 3" evidence="3">
    <location>
        <begin position="275"/>
        <end position="382"/>
    </location>
</feature>
<feature type="domain" description="Ig-like V-type 4" evidence="3">
    <location>
        <begin position="393"/>
        <end position="500"/>
    </location>
</feature>
<feature type="domain" description="Ig-like V-type 5" evidence="3">
    <location>
        <begin position="509"/>
        <end position="616"/>
    </location>
</feature>
<feature type="domain" description="Ig-like C2-type" evidence="1">
    <location>
        <begin position="631"/>
        <end position="695"/>
    </location>
</feature>
<feature type="glycosylation site" description="N-linked (GlcNAc...) asparagine" evidence="1">
    <location>
        <position position="73"/>
    </location>
</feature>
<feature type="glycosylation site" description="N-linked (GlcNAc...) asparagine" evidence="1">
    <location>
        <position position="86"/>
    </location>
</feature>
<feature type="glycosylation site" description="N-linked (GlcNAc...) asparagine" evidence="1">
    <location>
        <position position="103"/>
    </location>
</feature>
<feature type="glycosylation site" description="N-linked (GlcNAc...) asparagine" evidence="1">
    <location>
        <position position="110"/>
    </location>
</feature>
<feature type="glycosylation site" description="N-linked (GlcNAc...) asparagine" evidence="1">
    <location>
        <position position="133"/>
    </location>
</feature>
<feature type="glycosylation site" description="N-linked (GlcNAc...) asparagine" evidence="1">
    <location>
        <position position="207"/>
    </location>
</feature>
<feature type="glycosylation site" description="N-linked (GlcNAc...) asparagine" evidence="1">
    <location>
        <position position="224"/>
    </location>
</feature>
<feature type="glycosylation site" description="N-linked (GlcNAc...) asparagine" evidence="1">
    <location>
        <position position="231"/>
    </location>
</feature>
<feature type="glycosylation site" description="N-linked (GlcNAc...) asparagine" evidence="1">
    <location>
        <position position="327"/>
    </location>
</feature>
<feature type="glycosylation site" description="N-linked (GlcNAc...) asparagine" evidence="1">
    <location>
        <position position="344"/>
    </location>
</feature>
<feature type="glycosylation site" description="N-linked (GlcNAc...) asparagine" evidence="1">
    <location>
        <position position="351"/>
    </location>
</feature>
<feature type="glycosylation site" description="N-linked (GlcNAc...) asparagine" evidence="1">
    <location>
        <position position="381"/>
    </location>
</feature>
<feature type="glycosylation site" description="N-linked (GlcNAc...) asparagine" evidence="1">
    <location>
        <position position="462"/>
    </location>
</feature>
<feature type="glycosylation site" description="N-linked (GlcNAc...) asparagine" evidence="1">
    <location>
        <position position="561"/>
    </location>
</feature>
<feature type="glycosylation site" description="N-linked (GlcNAc...) asparagine" evidence="1">
    <location>
        <position position="578"/>
    </location>
</feature>
<feature type="glycosylation site" description="N-linked (GlcNAc...) asparagine" evidence="1">
    <location>
        <position position="585"/>
    </location>
</feature>
<feature type="sequence conflict" description="In Ref. 2; AAA40908." evidence="4" ref="2">
    <original>H</original>
    <variation>R</variation>
    <location>
        <position position="54"/>
    </location>
</feature>
<gene>
    <name evidence="7" type="primary">Ceacam3</name>
    <name evidence="5" type="synonym">Cea1</name>
</gene>
<reference evidence="4 6" key="1">
    <citation type="journal article" date="1990" name="J. Biol. Chem.">
        <title>cDNA and gene analyses imply a novel structure for a rat carcinoembryonic antigen-related protein.</title>
        <authorList>
            <person name="Rebstock S."/>
            <person name="Lucas K."/>
            <person name="Thompson J.A."/>
            <person name="Zimmermann W."/>
        </authorList>
    </citation>
    <scope>NUCLEOTIDE SEQUENCE [MRNA]</scope>
    <scope>TISSUE SPECIFICITY</scope>
    <scope>DEVELOPMENTAL STAGE</scope>
    <source>
        <strain evidence="6">Sprague-Dawley</strain>
        <tissue evidence="6">Placenta</tissue>
    </source>
</reference>
<reference evidence="4 5" key="2">
    <citation type="journal article" date="1989" name="J. Biol. Chem.">
        <title>Identification of a carcinoembryonic antigen gene family in the rat: Analysis of the N-terminal domains reveals immunoglobulin-like, hypervariable regions.</title>
        <authorList>
            <person name="Kodelja V."/>
            <person name="Lucas K."/>
            <person name="Barnert S."/>
            <person name="von Kleist S."/>
            <person name="Thompson J.A."/>
            <person name="Zimmermann W."/>
        </authorList>
    </citation>
    <scope>NUCLEOTIDE SEQUENCE [GENOMIC DNA] OF 23-141</scope>
    <source>
        <tissue evidence="5">Liver</tissue>
    </source>
</reference>